<name>PG034_MONPV</name>
<accession>A0A7H0DN07</accession>
<proteinExistence type="inferred from homology"/>
<organism evidence="3 4">
    <name type="scientific">Monkeypox virus</name>
    <dbReference type="NCBI Taxonomy" id="10244"/>
    <lineage>
        <taxon>Viruses</taxon>
        <taxon>Varidnaviria</taxon>
        <taxon>Bamfordvirae</taxon>
        <taxon>Nucleocytoviricota</taxon>
        <taxon>Pokkesviricetes</taxon>
        <taxon>Chitovirales</taxon>
        <taxon>Poxviridae</taxon>
        <taxon>Chordopoxvirinae</taxon>
        <taxon>Orthopoxvirus</taxon>
    </lineage>
</organism>
<protein>
    <recommendedName>
        <fullName>Protein OPG034</fullName>
    </recommendedName>
</protein>
<evidence type="ECO:0000250" key="1">
    <source>
        <dbReference type="UniProtKB" id="P17368"/>
    </source>
</evidence>
<evidence type="ECO:0000305" key="2"/>
<evidence type="ECO:0000312" key="3">
    <source>
        <dbReference type="EMBL" id="QNP12890.1"/>
    </source>
</evidence>
<evidence type="ECO:0000312" key="4">
    <source>
        <dbReference type="Proteomes" id="UP000516359"/>
    </source>
</evidence>
<sequence length="214" mass="25278">MIMRTDTNNILMRHLKNLTDDEFKCIIHRSSDFLYLSDRDYTSITKETLVSEIVEEYPDDCNKILAIIFLVLDKDIDVDIETKLTPTPKPAVRFAILDKMTADIKLTDLVRHYFRYIEQDIPLGPLFKKIDSYRIRAINNYSKELGLATEYFNKYGHLMFYTLPIPYNRFFCRNSIGFLAVLSPTIGYVKAFYKFIEYVSIDDRLKFKKELMSK</sequence>
<gene>
    <name type="primary">OPG034</name>
    <name evidence="3" type="ORF">MPXV-M5312_HM12_Rivers-018</name>
    <name type="ORF">MPXVgp022</name>
</gene>
<keyword id="KW-0244">Early protein</keyword>
<keyword id="KW-1185">Reference proteome</keyword>
<dbReference type="EMBL" id="MT903340">
    <property type="protein sequence ID" value="QNP12890.1"/>
    <property type="molecule type" value="Genomic_DNA"/>
</dbReference>
<dbReference type="RefSeq" id="YP_010377017.1">
    <property type="nucleotide sequence ID" value="NC_063383.1"/>
</dbReference>
<dbReference type="SMR" id="A0A7H0DN07"/>
<dbReference type="GeneID" id="72551431"/>
<dbReference type="Proteomes" id="UP000516359">
    <property type="component" value="Genome"/>
</dbReference>
<dbReference type="InterPro" id="IPR008724">
    <property type="entry name" value="Orthopox_C1"/>
</dbReference>
<dbReference type="InterPro" id="IPR022819">
    <property type="entry name" value="Poxvirus_Bcl-2-like"/>
</dbReference>
<dbReference type="Pfam" id="PF06227">
    <property type="entry name" value="Poxv_Bcl-2-like"/>
    <property type="match status" value="1"/>
</dbReference>
<dbReference type="PIRSF" id="PIRSF003783">
    <property type="entry name" value="VAC_C1L"/>
    <property type="match status" value="1"/>
</dbReference>
<feature type="chain" id="PRO_0000457197" description="Protein OPG034">
    <location>
        <begin position="1"/>
        <end position="214"/>
    </location>
</feature>
<organismHost>
    <name type="scientific">Cynomys gunnisoni</name>
    <name type="common">Gunnison's prairie dog</name>
    <name type="synonym">Spermophilus gunnisoni</name>
    <dbReference type="NCBI Taxonomy" id="45479"/>
</organismHost>
<organismHost>
    <name type="scientific">Cynomys leucurus</name>
    <name type="common">White-tailed prairie dog</name>
    <dbReference type="NCBI Taxonomy" id="99825"/>
</organismHost>
<organismHost>
    <name type="scientific">Cynomys ludovicianus</name>
    <name type="common">Black-tailed prairie dog</name>
    <dbReference type="NCBI Taxonomy" id="45480"/>
</organismHost>
<organismHost>
    <name type="scientific">Cynomys mexicanus</name>
    <name type="common">Mexican prairie dog</name>
    <dbReference type="NCBI Taxonomy" id="99826"/>
</organismHost>
<organismHost>
    <name type="scientific">Cynomys parvidens</name>
    <name type="common">Utah prairie dog</name>
    <dbReference type="NCBI Taxonomy" id="99827"/>
</organismHost>
<organismHost>
    <name type="scientific">Gliridae</name>
    <name type="common">dormice</name>
    <dbReference type="NCBI Taxonomy" id="30650"/>
</organismHost>
<organismHost>
    <name type="scientific">Heliosciurus ruwenzorii</name>
    <name type="common">Ruwenzori sun squirrel</name>
    <dbReference type="NCBI Taxonomy" id="226685"/>
</organismHost>
<organismHost>
    <name type="scientific">Homo sapiens</name>
    <name type="common">Human</name>
    <dbReference type="NCBI Taxonomy" id="9606"/>
</organismHost>
<organismHost>
    <name type="scientific">Mus musculus</name>
    <name type="common">Mouse</name>
    <dbReference type="NCBI Taxonomy" id="10090"/>
</organismHost>
<reference key="1">
    <citation type="journal article" date="2022" name="J. Infect. Dis.">
        <title>Exportation of Monkeypox virus from the African continent.</title>
        <authorList>
            <person name="Mauldin M.R."/>
            <person name="McCollum A.M."/>
            <person name="Nakazawa Y.J."/>
            <person name="Mandra A."/>
            <person name="Whitehouse E.R."/>
            <person name="Davidson W."/>
            <person name="Zhao H."/>
            <person name="Gao J."/>
            <person name="Li Y."/>
            <person name="Doty J."/>
            <person name="Yinka-Ogunleye A."/>
            <person name="Akinpelu A."/>
            <person name="Aruna O."/>
            <person name="Naidoo D."/>
            <person name="Lewandowski K."/>
            <person name="Afrough B."/>
            <person name="Graham V."/>
            <person name="Aarons E."/>
            <person name="Hewson R."/>
            <person name="Vipond R."/>
            <person name="Dunning J."/>
            <person name="Chand M."/>
            <person name="Brown C."/>
            <person name="Cohen-Gihon I."/>
            <person name="Erez N."/>
            <person name="Shifman O."/>
            <person name="Israeli O."/>
            <person name="Sharon M."/>
            <person name="Schwartz E."/>
            <person name="Beth-Din A."/>
            <person name="Zvi A."/>
            <person name="Mak T.M."/>
            <person name="Ng Y.K."/>
            <person name="Cui L."/>
            <person name="Lin R.T.P."/>
            <person name="Olson V.A."/>
            <person name="Brooks T."/>
            <person name="Paran N."/>
            <person name="Ihekweazu C."/>
            <person name="Reynolds M.G."/>
        </authorList>
    </citation>
    <scope>NUCLEOTIDE SEQUENCE [LARGE SCALE GENOMIC DNA]</scope>
    <source>
        <strain>MPXV-M5312_HM12_Rivers</strain>
    </source>
</reference>
<comment type="induction">
    <text evidence="1">Expressed in the early phase of the viral replicative cycle.</text>
</comment>
<comment type="similarity">
    <text evidence="2">Belongs to the orthopoxvirus OPG034 family.</text>
</comment>